<protein>
    <recommendedName>
        <fullName evidence="1">Ribose import ATP-binding protein RbsA</fullName>
        <ecNumber evidence="1">7.5.2.7</ecNumber>
    </recommendedName>
</protein>
<sequence length="492" mass="54896">MKIDMRNISKSFGTNKVLEKIDLELQSGQIHALMGENGAGKSTLMNILTGLFPASTGTIYIDGEERTFSNPQEAEEFGISFIHQEMNTWPEMTVLENLFLGREIKTTFGLLNQKLMRQKALEAFKRLGVTIPLDIPIGNLSVGQQQMIEIAKSLLSQLSILVMDEPTAALTDRETENLFRVIRSLKQEGVGIVYISHRMEEIFKITDFVTVMRDGVIVDTKETSLTNSDELVKKMVGRKLEDYYPEKHSEIGPVAFEVSNLCGDNFEDVSFYVRKGEILGFSGLMGAGRTEVMRTIFGIDKKKSGKVKIDDQEITITSPSQAIKQGIGFLTENRKDEGLILDFNIKDNMTLPSTKDFSKHGFFDEKTSTTFVQQLINRLYIKSGRPDLEVGNLSGGNQQKVVLAKWIGIAPKVLILDEPTRGVDVGAKREIYQLMNELADRGVPIVMVSSDLPEILGVSDRIMVMHEGRISGELSRKEADQEKVMQLATGGK</sequence>
<comment type="function">
    <text evidence="1">Part of the ABC transporter complex RbsABC involved in ribose import. Responsible for energy coupling to the transport system.</text>
</comment>
<comment type="catalytic activity">
    <reaction evidence="1">
        <text>D-ribose(out) + ATP + H2O = D-ribose(in) + ADP + phosphate + H(+)</text>
        <dbReference type="Rhea" id="RHEA:29903"/>
        <dbReference type="ChEBI" id="CHEBI:15377"/>
        <dbReference type="ChEBI" id="CHEBI:15378"/>
        <dbReference type="ChEBI" id="CHEBI:30616"/>
        <dbReference type="ChEBI" id="CHEBI:43474"/>
        <dbReference type="ChEBI" id="CHEBI:47013"/>
        <dbReference type="ChEBI" id="CHEBI:456216"/>
        <dbReference type="EC" id="7.5.2.7"/>
    </reaction>
</comment>
<comment type="subunit">
    <text evidence="1">The complex is composed of an ATP-binding protein (RbsA), two transmembrane proteins (RbsC) and a solute-binding protein (RbsB).</text>
</comment>
<comment type="subcellular location">
    <subcellularLocation>
        <location evidence="1">Cell membrane</location>
        <topology evidence="1">Peripheral membrane protein</topology>
    </subcellularLocation>
</comment>
<comment type="similarity">
    <text evidence="1">Belongs to the ABC transporter superfamily. Ribose importer (TC 3.A.1.2.1) family.</text>
</comment>
<evidence type="ECO:0000255" key="1">
    <source>
        <dbReference type="HAMAP-Rule" id="MF_01716"/>
    </source>
</evidence>
<proteinExistence type="inferred from homology"/>
<reference key="1">
    <citation type="journal article" date="2005" name="Proc. Natl. Acad. Sci. U.S.A.">
        <title>Genome analysis of multiple pathogenic isolates of Streptococcus agalactiae: implications for the microbial 'pan-genome'.</title>
        <authorList>
            <person name="Tettelin H."/>
            <person name="Masignani V."/>
            <person name="Cieslewicz M.J."/>
            <person name="Donati C."/>
            <person name="Medini D."/>
            <person name="Ward N.L."/>
            <person name="Angiuoli S.V."/>
            <person name="Crabtree J."/>
            <person name="Jones A.L."/>
            <person name="Durkin A.S."/>
            <person name="DeBoy R.T."/>
            <person name="Davidsen T.M."/>
            <person name="Mora M."/>
            <person name="Scarselli M."/>
            <person name="Margarit y Ros I."/>
            <person name="Peterson J.D."/>
            <person name="Hauser C.R."/>
            <person name="Sundaram J.P."/>
            <person name="Nelson W.C."/>
            <person name="Madupu R."/>
            <person name="Brinkac L.M."/>
            <person name="Dodson R.J."/>
            <person name="Rosovitz M.J."/>
            <person name="Sullivan S.A."/>
            <person name="Daugherty S.C."/>
            <person name="Haft D.H."/>
            <person name="Selengut J."/>
            <person name="Gwinn M.L."/>
            <person name="Zhou L."/>
            <person name="Zafar N."/>
            <person name="Khouri H."/>
            <person name="Radune D."/>
            <person name="Dimitrov G."/>
            <person name="Watkins K."/>
            <person name="O'Connor K.J."/>
            <person name="Smith S."/>
            <person name="Utterback T.R."/>
            <person name="White O."/>
            <person name="Rubens C.E."/>
            <person name="Grandi G."/>
            <person name="Madoff L.C."/>
            <person name="Kasper D.L."/>
            <person name="Telford J.L."/>
            <person name="Wessels M.R."/>
            <person name="Rappuoli R."/>
            <person name="Fraser C.M."/>
        </authorList>
    </citation>
    <scope>NUCLEOTIDE SEQUENCE [LARGE SCALE GENOMIC DNA]</scope>
    <source>
        <strain>ATCC 27591 / A909 / CDC SS700</strain>
    </source>
</reference>
<dbReference type="EC" id="7.5.2.7" evidence="1"/>
<dbReference type="EMBL" id="CP000114">
    <property type="protein sequence ID" value="ABA45141.1"/>
    <property type="molecule type" value="Genomic_DNA"/>
</dbReference>
<dbReference type="RefSeq" id="WP_000687224.1">
    <property type="nucleotide sequence ID" value="NC_007432.1"/>
</dbReference>
<dbReference type="SMR" id="Q3K3R2"/>
<dbReference type="KEGG" id="sak:SAK_0168"/>
<dbReference type="HOGENOM" id="CLU_000604_92_3_9"/>
<dbReference type="GO" id="GO:0005886">
    <property type="term" value="C:plasma membrane"/>
    <property type="evidence" value="ECO:0007669"/>
    <property type="project" value="UniProtKB-SubCell"/>
</dbReference>
<dbReference type="GO" id="GO:0015611">
    <property type="term" value="F:ABC-type D-ribose transporter activity"/>
    <property type="evidence" value="ECO:0007669"/>
    <property type="project" value="UniProtKB-EC"/>
</dbReference>
<dbReference type="GO" id="GO:0005524">
    <property type="term" value="F:ATP binding"/>
    <property type="evidence" value="ECO:0007669"/>
    <property type="project" value="UniProtKB-KW"/>
</dbReference>
<dbReference type="GO" id="GO:0016887">
    <property type="term" value="F:ATP hydrolysis activity"/>
    <property type="evidence" value="ECO:0007669"/>
    <property type="project" value="InterPro"/>
</dbReference>
<dbReference type="CDD" id="cd03216">
    <property type="entry name" value="ABC_Carb_Monos_I"/>
    <property type="match status" value="1"/>
</dbReference>
<dbReference type="CDD" id="cd03215">
    <property type="entry name" value="ABC_Carb_Monos_II"/>
    <property type="match status" value="1"/>
</dbReference>
<dbReference type="FunFam" id="3.40.50.300:FF:000126">
    <property type="entry name" value="Galactose/methyl galactoside import ATP-binding protein MglA"/>
    <property type="match status" value="1"/>
</dbReference>
<dbReference type="FunFam" id="3.40.50.300:FF:000127">
    <property type="entry name" value="Ribose import ATP-binding protein RbsA"/>
    <property type="match status" value="1"/>
</dbReference>
<dbReference type="Gene3D" id="3.40.50.300">
    <property type="entry name" value="P-loop containing nucleotide triphosphate hydrolases"/>
    <property type="match status" value="2"/>
</dbReference>
<dbReference type="InterPro" id="IPR003593">
    <property type="entry name" value="AAA+_ATPase"/>
</dbReference>
<dbReference type="InterPro" id="IPR050107">
    <property type="entry name" value="ABC_carbohydrate_import_ATPase"/>
</dbReference>
<dbReference type="InterPro" id="IPR003439">
    <property type="entry name" value="ABC_transporter-like_ATP-bd"/>
</dbReference>
<dbReference type="InterPro" id="IPR017871">
    <property type="entry name" value="ABC_transporter-like_CS"/>
</dbReference>
<dbReference type="InterPro" id="IPR027417">
    <property type="entry name" value="P-loop_NTPase"/>
</dbReference>
<dbReference type="PANTHER" id="PTHR43790">
    <property type="entry name" value="CARBOHYDRATE TRANSPORT ATP-BINDING PROTEIN MG119-RELATED"/>
    <property type="match status" value="1"/>
</dbReference>
<dbReference type="PANTHER" id="PTHR43790:SF3">
    <property type="entry name" value="D-ALLOSE IMPORT ATP-BINDING PROTEIN ALSA-RELATED"/>
    <property type="match status" value="1"/>
</dbReference>
<dbReference type="Pfam" id="PF00005">
    <property type="entry name" value="ABC_tran"/>
    <property type="match status" value="2"/>
</dbReference>
<dbReference type="SMART" id="SM00382">
    <property type="entry name" value="AAA"/>
    <property type="match status" value="2"/>
</dbReference>
<dbReference type="SUPFAM" id="SSF52540">
    <property type="entry name" value="P-loop containing nucleoside triphosphate hydrolases"/>
    <property type="match status" value="2"/>
</dbReference>
<dbReference type="PROSITE" id="PS00211">
    <property type="entry name" value="ABC_TRANSPORTER_1"/>
    <property type="match status" value="2"/>
</dbReference>
<dbReference type="PROSITE" id="PS50893">
    <property type="entry name" value="ABC_TRANSPORTER_2"/>
    <property type="match status" value="2"/>
</dbReference>
<dbReference type="PROSITE" id="PS51254">
    <property type="entry name" value="RBSA"/>
    <property type="match status" value="1"/>
</dbReference>
<organism>
    <name type="scientific">Streptococcus agalactiae serotype Ia (strain ATCC 27591 / A909 / CDC SS700)</name>
    <dbReference type="NCBI Taxonomy" id="205921"/>
    <lineage>
        <taxon>Bacteria</taxon>
        <taxon>Bacillati</taxon>
        <taxon>Bacillota</taxon>
        <taxon>Bacilli</taxon>
        <taxon>Lactobacillales</taxon>
        <taxon>Streptococcaceae</taxon>
        <taxon>Streptococcus</taxon>
    </lineage>
</organism>
<feature type="chain" id="PRO_0000261105" description="Ribose import ATP-binding protein RbsA">
    <location>
        <begin position="1"/>
        <end position="492"/>
    </location>
</feature>
<feature type="domain" description="ABC transporter 1" evidence="1">
    <location>
        <begin position="3"/>
        <end position="239"/>
    </location>
</feature>
<feature type="domain" description="ABC transporter 2" evidence="1">
    <location>
        <begin position="238"/>
        <end position="492"/>
    </location>
</feature>
<feature type="binding site" evidence="1">
    <location>
        <begin position="35"/>
        <end position="42"/>
    </location>
    <ligand>
        <name>ATP</name>
        <dbReference type="ChEBI" id="CHEBI:30616"/>
    </ligand>
</feature>
<keyword id="KW-0067">ATP-binding</keyword>
<keyword id="KW-1003">Cell membrane</keyword>
<keyword id="KW-0472">Membrane</keyword>
<keyword id="KW-0547">Nucleotide-binding</keyword>
<keyword id="KW-0677">Repeat</keyword>
<keyword id="KW-0762">Sugar transport</keyword>
<keyword id="KW-1278">Translocase</keyword>
<keyword id="KW-0813">Transport</keyword>
<gene>
    <name evidence="1" type="primary">rbsA</name>
    <name type="ordered locus">SAK_0168</name>
</gene>
<accession>Q3K3R2</accession>
<name>RBSA_STRA1</name>